<reference key="1">
    <citation type="journal article" date="2005" name="Science">
        <title>The genome of the kinetoplastid parasite, Leishmania major.</title>
        <authorList>
            <person name="Ivens A.C."/>
            <person name="Peacock C.S."/>
            <person name="Worthey E.A."/>
            <person name="Murphy L."/>
            <person name="Aggarwal G."/>
            <person name="Berriman M."/>
            <person name="Sisk E."/>
            <person name="Rajandream M.A."/>
            <person name="Adlem E."/>
            <person name="Aert R."/>
            <person name="Anupama A."/>
            <person name="Apostolou Z."/>
            <person name="Attipoe P."/>
            <person name="Bason N."/>
            <person name="Bauser C."/>
            <person name="Beck A."/>
            <person name="Beverley S.M."/>
            <person name="Bianchettin G."/>
            <person name="Borzym K."/>
            <person name="Bothe G."/>
            <person name="Bruschi C.V."/>
            <person name="Collins M."/>
            <person name="Cadag E."/>
            <person name="Ciarloni L."/>
            <person name="Clayton C."/>
            <person name="Coulson R.M.R."/>
            <person name="Cronin A."/>
            <person name="Cruz A.K."/>
            <person name="Davies R.M."/>
            <person name="De Gaudenzi J."/>
            <person name="Dobson D.E."/>
            <person name="Duesterhoeft A."/>
            <person name="Fazelina G."/>
            <person name="Fosker N."/>
            <person name="Frasch A.C."/>
            <person name="Fraser A."/>
            <person name="Fuchs M."/>
            <person name="Gabel C."/>
            <person name="Goble A."/>
            <person name="Goffeau A."/>
            <person name="Harris D."/>
            <person name="Hertz-Fowler C."/>
            <person name="Hilbert H."/>
            <person name="Horn D."/>
            <person name="Huang Y."/>
            <person name="Klages S."/>
            <person name="Knights A."/>
            <person name="Kube M."/>
            <person name="Larke N."/>
            <person name="Litvin L."/>
            <person name="Lord A."/>
            <person name="Louie T."/>
            <person name="Marra M."/>
            <person name="Masuy D."/>
            <person name="Matthews K."/>
            <person name="Michaeli S."/>
            <person name="Mottram J.C."/>
            <person name="Mueller-Auer S."/>
            <person name="Munden H."/>
            <person name="Nelson S."/>
            <person name="Norbertczak H."/>
            <person name="Oliver K."/>
            <person name="O'neil S."/>
            <person name="Pentony M."/>
            <person name="Pohl T.M."/>
            <person name="Price C."/>
            <person name="Purnelle B."/>
            <person name="Quail M.A."/>
            <person name="Rabbinowitsch E."/>
            <person name="Reinhardt R."/>
            <person name="Rieger M."/>
            <person name="Rinta J."/>
            <person name="Robben J."/>
            <person name="Robertson L."/>
            <person name="Ruiz J.C."/>
            <person name="Rutter S."/>
            <person name="Saunders D."/>
            <person name="Schaefer M."/>
            <person name="Schein J."/>
            <person name="Schwartz D.C."/>
            <person name="Seeger K."/>
            <person name="Seyler A."/>
            <person name="Sharp S."/>
            <person name="Shin H."/>
            <person name="Sivam D."/>
            <person name="Squares R."/>
            <person name="Squares S."/>
            <person name="Tosato V."/>
            <person name="Vogt C."/>
            <person name="Volckaert G."/>
            <person name="Wambutt R."/>
            <person name="Warren T."/>
            <person name="Wedler H."/>
            <person name="Woodward J."/>
            <person name="Zhou S."/>
            <person name="Zimmermann W."/>
            <person name="Smith D.F."/>
            <person name="Blackwell J.M."/>
            <person name="Stuart K.D."/>
            <person name="Barrell B.G."/>
            <person name="Myler P.J."/>
        </authorList>
    </citation>
    <scope>NUCLEOTIDE SEQUENCE [LARGE SCALE GENOMIC DNA]</scope>
    <source>
        <strain>MHOM/IL/81/Friedlin</strain>
    </source>
</reference>
<reference evidence="5 6" key="2">
    <citation type="submission" date="2004-03" db="PDB data bank">
        <title>Coproporphyrinogen III oxidase from Leishmania major.</title>
        <authorList>
            <consortium name="Structural genomics of pathogenic protozoa consortium (SGPP)"/>
        </authorList>
    </citation>
    <scope>X-RAY CRYSTALLOGRAPHY (1.40 ANGSTROMS) OF 1-301</scope>
    <scope>SUBUNIT</scope>
</reference>
<reference evidence="5 6" key="3">
    <citation type="submission" date="2008-07" db="PDB data bank">
        <title>Leishmania major coproporphyrinogen III oxidase with bound ligand.</title>
        <authorList>
            <person name="Merritt E.A."/>
            <person name="Le Trong I."/>
            <person name="Larson E.T."/>
            <person name="Shibata S."/>
            <person name="Zhang Z."/>
            <person name="Anderson L."/>
            <person name="Ross J."/>
            <person name="Verlinde C.L.M.J."/>
            <person name="Buckner F.S."/>
            <person name="Van Voorhis W.C."/>
            <person name="Hol G.J.W."/>
            <person name="Fan E."/>
        </authorList>
    </citation>
    <scope>X-RAY CRYSTALLOGRAPHY (1.66 ANGSTROMS) OF 1-301 IN COMPLEX WITH SUBSTRATE ANALOG</scope>
    <scope>SUBUNIT</scope>
</reference>
<feature type="chain" id="PRO_0000109876" description="Oxygen-dependent coproporphyrinogen-III oxidase">
    <location>
        <begin position="1"/>
        <end position="301"/>
    </location>
</feature>
<feature type="region of interest" description="Important for dimerization" evidence="1">
    <location>
        <begin position="49"/>
        <end position="58"/>
    </location>
</feature>
<feature type="region of interest" description="Important for dimerization" evidence="1">
    <location>
        <begin position="241"/>
        <end position="276"/>
    </location>
</feature>
<feature type="active site" description="Proton donor" evidence="1">
    <location>
        <position position="107"/>
    </location>
</feature>
<feature type="binding site">
    <location>
        <position position="93"/>
    </location>
    <ligand>
        <name>substrate</name>
    </ligand>
</feature>
<feature type="binding site">
    <location>
        <begin position="109"/>
        <end position="111"/>
    </location>
    <ligand>
        <name>substrate</name>
    </ligand>
</feature>
<feature type="binding site">
    <location>
        <begin position="259"/>
        <end position="261"/>
    </location>
    <ligand>
        <name>substrate</name>
    </ligand>
</feature>
<feature type="helix" evidence="7">
    <location>
        <begin position="2"/>
        <end position="27"/>
    </location>
</feature>
<feature type="strand" evidence="7">
    <location>
        <begin position="33"/>
        <end position="39"/>
    </location>
</feature>
<feature type="turn" evidence="7">
    <location>
        <begin position="40"/>
        <end position="42"/>
    </location>
</feature>
<feature type="strand" evidence="7">
    <location>
        <begin position="43"/>
        <end position="52"/>
    </location>
</feature>
<feature type="strand" evidence="7">
    <location>
        <begin position="54"/>
        <end position="69"/>
    </location>
</feature>
<feature type="helix" evidence="8">
    <location>
        <begin position="73"/>
        <end position="76"/>
    </location>
</feature>
<feature type="turn" evidence="8">
    <location>
        <begin position="81"/>
        <end position="84"/>
    </location>
</feature>
<feature type="strand" evidence="7">
    <location>
        <begin position="86"/>
        <end position="100"/>
    </location>
</feature>
<feature type="strand" evidence="7">
    <location>
        <begin position="105"/>
        <end position="117"/>
    </location>
</feature>
<feature type="strand" evidence="7">
    <location>
        <begin position="120"/>
        <end position="133"/>
    </location>
</feature>
<feature type="helix" evidence="7">
    <location>
        <begin position="139"/>
        <end position="153"/>
    </location>
</feature>
<feature type="helix" evidence="7">
    <location>
        <begin position="154"/>
        <end position="156"/>
    </location>
</feature>
<feature type="helix" evidence="7">
    <location>
        <begin position="160"/>
        <end position="171"/>
    </location>
</feature>
<feature type="strand" evidence="7">
    <location>
        <begin position="172"/>
        <end position="174"/>
    </location>
</feature>
<feature type="helix" evidence="7">
    <location>
        <begin position="175"/>
        <end position="177"/>
    </location>
</feature>
<feature type="strand" evidence="7">
    <location>
        <begin position="179"/>
        <end position="191"/>
    </location>
</feature>
<feature type="helix" evidence="7">
    <location>
        <begin position="196"/>
        <end position="221"/>
    </location>
</feature>
<feature type="helix" evidence="7">
    <location>
        <begin position="228"/>
        <end position="247"/>
    </location>
</feature>
<feature type="helix" evidence="7">
    <location>
        <begin position="250"/>
        <end position="257"/>
    </location>
</feature>
<feature type="helix" evidence="7">
    <location>
        <begin position="262"/>
        <end position="265"/>
    </location>
</feature>
<feature type="helix" evidence="7">
    <location>
        <begin position="266"/>
        <end position="268"/>
    </location>
</feature>
<feature type="strand" evidence="9">
    <location>
        <begin position="271"/>
        <end position="274"/>
    </location>
</feature>
<feature type="helix" evidence="7">
    <location>
        <begin position="286"/>
        <end position="292"/>
    </location>
</feature>
<feature type="helix" evidence="7">
    <location>
        <begin position="294"/>
        <end position="297"/>
    </location>
</feature>
<proteinExistence type="evidence at protein level"/>
<accession>P84155</accession>
<dbReference type="EC" id="1.3.3.3"/>
<dbReference type="EMBL" id="FR796402">
    <property type="protein sequence ID" value="CAJ02175.1"/>
    <property type="molecule type" value="Genomic_DNA"/>
</dbReference>
<dbReference type="RefSeq" id="XP_001680900.1">
    <property type="nucleotide sequence ID" value="XM_001680848.1"/>
</dbReference>
<dbReference type="PDB" id="1VJU">
    <property type="method" value="X-ray"/>
    <property type="resolution" value="1.40 A"/>
    <property type="chains" value="A/B=1-301"/>
</dbReference>
<dbReference type="PDB" id="2QT8">
    <property type="method" value="X-ray"/>
    <property type="resolution" value="1.75 A"/>
    <property type="chains" value="A/B=1-301"/>
</dbReference>
<dbReference type="PDB" id="3DWR">
    <property type="method" value="X-ray"/>
    <property type="resolution" value="1.66 A"/>
    <property type="chains" value="A/B=1-301"/>
</dbReference>
<dbReference type="PDB" id="3DWS">
    <property type="method" value="X-ray"/>
    <property type="resolution" value="2.50 A"/>
    <property type="chains" value="A/B=1-301"/>
</dbReference>
<dbReference type="PDBsum" id="1VJU"/>
<dbReference type="PDBsum" id="2QT8"/>
<dbReference type="PDBsum" id="3DWR"/>
<dbReference type="PDBsum" id="3DWS"/>
<dbReference type="SMR" id="P84155"/>
<dbReference type="FunCoup" id="P84155">
    <property type="interactions" value="225"/>
</dbReference>
<dbReference type="STRING" id="5664.P84155"/>
<dbReference type="EnsemblProtists" id="CAJ02175">
    <property type="protein sequence ID" value="CAJ02175"/>
    <property type="gene ID" value="LMJF_06_1270"/>
</dbReference>
<dbReference type="GeneID" id="5649152"/>
<dbReference type="KEGG" id="lma:LMJF_06_1270"/>
<dbReference type="VEuPathDB" id="TriTrypDB:LmjF.06.1270"/>
<dbReference type="VEuPathDB" id="TriTrypDB:LMJFC_060019800"/>
<dbReference type="VEuPathDB" id="TriTrypDB:LMJLV39_060019600"/>
<dbReference type="VEuPathDB" id="TriTrypDB:LMJSD75_060019700"/>
<dbReference type="eggNOG" id="KOG1518">
    <property type="taxonomic scope" value="Eukaryota"/>
</dbReference>
<dbReference type="InParanoid" id="P84155"/>
<dbReference type="OMA" id="NTPYTEQ"/>
<dbReference type="UniPathway" id="UPA00251">
    <property type="reaction ID" value="UER00322"/>
</dbReference>
<dbReference type="EvolutionaryTrace" id="P84155"/>
<dbReference type="Proteomes" id="UP000000542">
    <property type="component" value="Chromosome 6"/>
</dbReference>
<dbReference type="GO" id="GO:0005737">
    <property type="term" value="C:cytoplasm"/>
    <property type="evidence" value="ECO:0000318"/>
    <property type="project" value="GO_Central"/>
</dbReference>
<dbReference type="GO" id="GO:0004109">
    <property type="term" value="F:coproporphyrinogen oxidase activity"/>
    <property type="evidence" value="ECO:0000318"/>
    <property type="project" value="GO_Central"/>
</dbReference>
<dbReference type="GO" id="GO:0042803">
    <property type="term" value="F:protein homodimerization activity"/>
    <property type="evidence" value="ECO:0000250"/>
    <property type="project" value="UniProtKB"/>
</dbReference>
<dbReference type="GO" id="GO:0006782">
    <property type="term" value="P:protoporphyrinogen IX biosynthetic process"/>
    <property type="evidence" value="ECO:0000318"/>
    <property type="project" value="GO_Central"/>
</dbReference>
<dbReference type="FunFam" id="3.40.1500.10:FF:000001">
    <property type="entry name" value="Oxygen-dependent coproporphyrinogen-III oxidase"/>
    <property type="match status" value="1"/>
</dbReference>
<dbReference type="Gene3D" id="3.40.1500.10">
    <property type="entry name" value="Coproporphyrinogen III oxidase, aerobic"/>
    <property type="match status" value="1"/>
</dbReference>
<dbReference type="HAMAP" id="MF_00333">
    <property type="entry name" value="Coprogen_oxidas"/>
    <property type="match status" value="1"/>
</dbReference>
<dbReference type="InterPro" id="IPR001260">
    <property type="entry name" value="Coprogen_oxidase_aer"/>
</dbReference>
<dbReference type="InterPro" id="IPR036406">
    <property type="entry name" value="Coprogen_oxidase_aer_sf"/>
</dbReference>
<dbReference type="InterPro" id="IPR018375">
    <property type="entry name" value="Coprogen_oxidase_CS"/>
</dbReference>
<dbReference type="NCBIfam" id="NF003727">
    <property type="entry name" value="PRK05330.1"/>
    <property type="match status" value="1"/>
</dbReference>
<dbReference type="PANTHER" id="PTHR10755">
    <property type="entry name" value="COPROPORPHYRINOGEN III OXIDASE, MITOCHONDRIAL"/>
    <property type="match status" value="1"/>
</dbReference>
<dbReference type="PANTHER" id="PTHR10755:SF0">
    <property type="entry name" value="OXYGEN-DEPENDENT COPROPORPHYRINOGEN-III OXIDASE, MITOCHONDRIAL"/>
    <property type="match status" value="1"/>
</dbReference>
<dbReference type="Pfam" id="PF01218">
    <property type="entry name" value="Coprogen_oxidas"/>
    <property type="match status" value="1"/>
</dbReference>
<dbReference type="PIRSF" id="PIRSF000166">
    <property type="entry name" value="Coproporphyri_ox"/>
    <property type="match status" value="1"/>
</dbReference>
<dbReference type="PRINTS" id="PR00073">
    <property type="entry name" value="COPRGNOXDASE"/>
</dbReference>
<dbReference type="SUPFAM" id="SSF102886">
    <property type="entry name" value="Coproporphyrinogen III oxidase"/>
    <property type="match status" value="1"/>
</dbReference>
<dbReference type="PROSITE" id="PS01021">
    <property type="entry name" value="COPROGEN_OXIDASE"/>
    <property type="match status" value="1"/>
</dbReference>
<sequence>MSLAVEAVKDFLLKLQDDICEALEAEDGQATFVEDKWTREGGGGGRTRVMVDGAVIEKGGVNFSHVYGKGLPMSSTERHPDIAGCNFEAMGVSLVIHPKNPHVPTSHANVRLFVAEREGKEPVWWFGGGFDLTPYYAVEEDCRDFHQVAQDLCKPFGADVYARFKGWCDEYFFIPYRNEARGIGGLFFDDLNEWPFEKCFEFVQAVGKGYMDAYIPIVNRRKNTPYTEQQVEFQEFRRGRYAEFNLVIDRGTKFGLQSGGRTESILISLPPRARWGYNWQPEPGTPEARLTEYFLTKRQWV</sequence>
<protein>
    <recommendedName>
        <fullName>Oxygen-dependent coproporphyrinogen-III oxidase</fullName>
        <shortName>Coprogen oxidase</shortName>
        <shortName>Coproporphyrinogenase</shortName>
        <ecNumber>1.3.3.3</ecNumber>
    </recommendedName>
</protein>
<keyword id="KW-0002">3D-structure</keyword>
<keyword id="KW-0963">Cytoplasm</keyword>
<keyword id="KW-0350">Heme biosynthesis</keyword>
<keyword id="KW-0560">Oxidoreductase</keyword>
<keyword id="KW-0627">Porphyrin biosynthesis</keyword>
<keyword id="KW-1185">Reference proteome</keyword>
<evidence type="ECO:0000250" key="1"/>
<evidence type="ECO:0000269" key="2">
    <source ref="2"/>
</evidence>
<evidence type="ECO:0000269" key="3">
    <source ref="3"/>
</evidence>
<evidence type="ECO:0000305" key="4"/>
<evidence type="ECO:0000312" key="5">
    <source>
        <dbReference type="EMBL" id="CAJ02175.1"/>
    </source>
</evidence>
<evidence type="ECO:0000312" key="6">
    <source>
        <dbReference type="PDB" id="1VJU"/>
    </source>
</evidence>
<evidence type="ECO:0007829" key="7">
    <source>
        <dbReference type="PDB" id="1VJU"/>
    </source>
</evidence>
<evidence type="ECO:0007829" key="8">
    <source>
        <dbReference type="PDB" id="2QT8"/>
    </source>
</evidence>
<evidence type="ECO:0007829" key="9">
    <source>
        <dbReference type="PDB" id="3DWR"/>
    </source>
</evidence>
<comment type="function">
    <text evidence="1">Involved in the heme biosynthesis. Catalyzes the aerobic oxidative decarboxylation of propionate groups of rings A and B of coproporphyrinogen-III to yield the vinyl groups in protoporphyrinogen-IX (By similarity).</text>
</comment>
<comment type="catalytic activity">
    <reaction evidence="4">
        <text>coproporphyrinogen III + O2 + 2 H(+) = protoporphyrinogen IX + 2 CO2 + 2 H2O</text>
        <dbReference type="Rhea" id="RHEA:18257"/>
        <dbReference type="ChEBI" id="CHEBI:15377"/>
        <dbReference type="ChEBI" id="CHEBI:15378"/>
        <dbReference type="ChEBI" id="CHEBI:15379"/>
        <dbReference type="ChEBI" id="CHEBI:16526"/>
        <dbReference type="ChEBI" id="CHEBI:57307"/>
        <dbReference type="ChEBI" id="CHEBI:57309"/>
        <dbReference type="EC" id="1.3.3.3"/>
    </reaction>
</comment>
<comment type="pathway">
    <text>Porphyrin-containing compound metabolism; protoporphyrin-IX biosynthesis; protoporphyrinogen-IX from coproporphyrinogen-III (O2 route): step 1/1.</text>
</comment>
<comment type="subunit">
    <text evidence="2 3">Homodimer.</text>
</comment>
<comment type="subcellular location">
    <subcellularLocation>
        <location evidence="1">Cytoplasm</location>
    </subcellularLocation>
</comment>
<comment type="similarity">
    <text evidence="4">Belongs to the aerobic coproporphyrinogen-III oxidase family.</text>
</comment>
<name>HEM6_LEIMA</name>
<organism>
    <name type="scientific">Leishmania major</name>
    <dbReference type="NCBI Taxonomy" id="5664"/>
    <lineage>
        <taxon>Eukaryota</taxon>
        <taxon>Discoba</taxon>
        <taxon>Euglenozoa</taxon>
        <taxon>Kinetoplastea</taxon>
        <taxon>Metakinetoplastina</taxon>
        <taxon>Trypanosomatida</taxon>
        <taxon>Trypanosomatidae</taxon>
        <taxon>Leishmaniinae</taxon>
        <taxon>Leishmania</taxon>
    </lineage>
</organism>
<gene>
    <name type="ORF">LMAJ006828</name>
    <name type="ORF">LmjF06.1270</name>
    <name type="ORF">LmjF_06_1270</name>
</gene>